<proteinExistence type="inferred from homology"/>
<reference key="1">
    <citation type="journal article" date="2005" name="Genetics">
        <title>Sequence finishing and gene mapping for Candida albicans chromosome 7 and syntenic analysis against the Saccharomyces cerevisiae genome.</title>
        <authorList>
            <person name="Chibana H."/>
            <person name="Oka N."/>
            <person name="Nakayama H."/>
            <person name="Aoyama T."/>
            <person name="Magee B.B."/>
            <person name="Magee P.T."/>
            <person name="Mikami Y."/>
        </authorList>
    </citation>
    <scope>NUCLEOTIDE SEQUENCE [LARGE SCALE GENOMIC DNA]</scope>
    <source>
        <strain>SC5314 / ATCC MYA-2876</strain>
    </source>
</reference>
<reference key="2">
    <citation type="journal article" date="2004" name="Proc. Natl. Acad. Sci. U.S.A.">
        <title>The diploid genome sequence of Candida albicans.</title>
        <authorList>
            <person name="Jones T."/>
            <person name="Federspiel N.A."/>
            <person name="Chibana H."/>
            <person name="Dungan J."/>
            <person name="Kalman S."/>
            <person name="Magee B.B."/>
            <person name="Newport G."/>
            <person name="Thorstenson Y.R."/>
            <person name="Agabian N."/>
            <person name="Magee P.T."/>
            <person name="Davis R.W."/>
            <person name="Scherer S."/>
        </authorList>
    </citation>
    <scope>NUCLEOTIDE SEQUENCE [LARGE SCALE GENOMIC DNA]</scope>
    <source>
        <strain>SC5314 / ATCC MYA-2876</strain>
    </source>
</reference>
<reference key="3">
    <citation type="journal article" date="2007" name="Genome Biol.">
        <title>Assembly of the Candida albicans genome into sixteen supercontigs aligned on the eight chromosomes.</title>
        <authorList>
            <person name="van het Hoog M."/>
            <person name="Rast T.J."/>
            <person name="Martchenko M."/>
            <person name="Grindle S."/>
            <person name="Dignard D."/>
            <person name="Hogues H."/>
            <person name="Cuomo C."/>
            <person name="Berriman M."/>
            <person name="Scherer S."/>
            <person name="Magee B.B."/>
            <person name="Whiteway M."/>
            <person name="Chibana H."/>
            <person name="Nantel A."/>
            <person name="Magee P.T."/>
        </authorList>
    </citation>
    <scope>GENOME REANNOTATION</scope>
    <source>
        <strain>SC5314 / ATCC MYA-2876</strain>
    </source>
</reference>
<reference key="4">
    <citation type="journal article" date="2013" name="Genome Biol.">
        <title>Assembly of a phased diploid Candida albicans genome facilitates allele-specific measurements and provides a simple model for repeat and indel structure.</title>
        <authorList>
            <person name="Muzzey D."/>
            <person name="Schwartz K."/>
            <person name="Weissman J.S."/>
            <person name="Sherlock G."/>
        </authorList>
    </citation>
    <scope>NUCLEOTIDE SEQUENCE [LARGE SCALE GENOMIC DNA]</scope>
    <scope>GENOME REANNOTATION</scope>
    <source>
        <strain>SC5314 / ATCC MYA-2876</strain>
    </source>
</reference>
<sequence length="472" mass="55468">MLDELSYKVLTNLETSYERKQPLGSKLIDRYTLTIDQSTVAQQSYFEQIIPAINRILMNSEAHVIDPDNVLIRLLPEILSHLSFEQILMYYPNDFILHFLFEEKLENVSVICLEVILLNLQEPETLQFLRDNNVISRLLREVYFKKTPISVLNKIERLITVLNGIEEINLLESCLPILKKIRDQGNTVLLSRYLDLVNLLLRYLPEFSPHLYSFTKQEFLKYQDDPLFLILLIQFYVKLVRLKAPVDLSLPLSDILSLYDKFDLLVKNEVVELVAQLSFTQSYTDILFKSQIFKTHNLLEVFEKTENSDIRLLSKANPQVIYELNNSIYPDVLAHLNLFTNNLYFPILLNFMSSTTIFYQLKLHLNNEKLSQLPMDKLFKLLLEMSTHNHSKEHLFNNLPTIMSTNLLETEDLRNNELWNLKLEILQNLLNDDSVPGFEFWHQELTRNYELMTFGRVFRNAAPRVDIIDETA</sequence>
<feature type="chain" id="PRO_0000301756" description="DNA mismatch repair protein HSM3">
    <location>
        <begin position="1"/>
        <end position="472"/>
    </location>
</feature>
<keyword id="KW-0143">Chaperone</keyword>
<keyword id="KW-0963">Cytoplasm</keyword>
<keyword id="KW-0227">DNA damage</keyword>
<keyword id="KW-0234">DNA repair</keyword>
<keyword id="KW-1185">Reference proteome</keyword>
<comment type="function">
    <text evidence="1">Involved in DNA mismatch repair in slow-growing cells. Acts as a chaperone during the assembly of the 26S proteasome, specifically of the base subcomplex of the 19S regulatory complex (RC) (By similarity).</text>
</comment>
<comment type="subcellular location">
    <subcellularLocation>
        <location evidence="1">Cytoplasm</location>
    </subcellularLocation>
</comment>
<comment type="similarity">
    <text evidence="2">Belongs to the proteasome subunit S5B/HSM3 family.</text>
</comment>
<evidence type="ECO:0000250" key="1"/>
<evidence type="ECO:0000305" key="2"/>
<organism>
    <name type="scientific">Candida albicans (strain SC5314 / ATCC MYA-2876)</name>
    <name type="common">Yeast</name>
    <dbReference type="NCBI Taxonomy" id="237561"/>
    <lineage>
        <taxon>Eukaryota</taxon>
        <taxon>Fungi</taxon>
        <taxon>Dikarya</taxon>
        <taxon>Ascomycota</taxon>
        <taxon>Saccharomycotina</taxon>
        <taxon>Pichiomycetes</taxon>
        <taxon>Debaryomycetaceae</taxon>
        <taxon>Candida/Lodderomyces clade</taxon>
        <taxon>Candida</taxon>
    </lineage>
</organism>
<dbReference type="EMBL" id="AP006852">
    <property type="protein sequence ID" value="BAE44849.1"/>
    <property type="molecule type" value="Genomic_DNA"/>
</dbReference>
<dbReference type="EMBL" id="CP017629">
    <property type="protein sequence ID" value="AOW30688.1"/>
    <property type="molecule type" value="Genomic_DNA"/>
</dbReference>
<dbReference type="RefSeq" id="XP_711671.1">
    <property type="nucleotide sequence ID" value="XM_706579.1"/>
</dbReference>
<dbReference type="SMR" id="Q59PP0"/>
<dbReference type="BioGRID" id="1229806">
    <property type="interactions" value="1"/>
</dbReference>
<dbReference type="FunCoup" id="Q59PP0">
    <property type="interactions" value="118"/>
</dbReference>
<dbReference type="STRING" id="237561.Q59PP0"/>
<dbReference type="EnsemblFungi" id="C7_03450C_A-T">
    <property type="protein sequence ID" value="C7_03450C_A-T-p1"/>
    <property type="gene ID" value="C7_03450C_A"/>
</dbReference>
<dbReference type="GeneID" id="3646713"/>
<dbReference type="KEGG" id="cal:CAALFM_C703450CA"/>
<dbReference type="CGD" id="CAL0000181303">
    <property type="gene designation" value="HSM3"/>
</dbReference>
<dbReference type="VEuPathDB" id="FungiDB:C7_03450C_A"/>
<dbReference type="eggNOG" id="ENOG502QWEK">
    <property type="taxonomic scope" value="Eukaryota"/>
</dbReference>
<dbReference type="HOGENOM" id="CLU_577450_0_0_1"/>
<dbReference type="InParanoid" id="Q59PP0"/>
<dbReference type="OMA" id="YMEQMVL"/>
<dbReference type="OrthoDB" id="4074002at2759"/>
<dbReference type="Proteomes" id="UP000000559">
    <property type="component" value="Chromosome 7"/>
</dbReference>
<dbReference type="GO" id="GO:0005737">
    <property type="term" value="C:cytoplasm"/>
    <property type="evidence" value="ECO:0007669"/>
    <property type="project" value="UniProtKB-SubCell"/>
</dbReference>
<dbReference type="GO" id="GO:0006281">
    <property type="term" value="P:DNA repair"/>
    <property type="evidence" value="ECO:0007669"/>
    <property type="project" value="UniProtKB-KW"/>
</dbReference>
<dbReference type="CDD" id="cd12794">
    <property type="entry name" value="Hsm3_like"/>
    <property type="match status" value="1"/>
</dbReference>
<dbReference type="Gene3D" id="1.25.10.50">
    <property type="match status" value="1"/>
</dbReference>
<dbReference type="Gene3D" id="1.25.40.580">
    <property type="match status" value="1"/>
</dbReference>
<dbReference type="InterPro" id="IPR040752">
    <property type="entry name" value="HSM3_C"/>
</dbReference>
<dbReference type="InterPro" id="IPR041335">
    <property type="entry name" value="HSM3_N"/>
</dbReference>
<dbReference type="Pfam" id="PF18794">
    <property type="entry name" value="HSM3_C"/>
    <property type="match status" value="1"/>
</dbReference>
<dbReference type="Pfam" id="PF18795">
    <property type="entry name" value="HSM3_N"/>
    <property type="match status" value="1"/>
</dbReference>
<accession>Q59PP0</accession>
<accession>A0A1D8PRC0</accession>
<accession>Q3MP11</accession>
<gene>
    <name type="primary">HSM3</name>
    <name type="ordered locus">CAALFM_C703450CA</name>
    <name type="ORF">CaJ7.0396</name>
    <name type="ORF">CaO19.1331</name>
    <name type="ORF">CaO19.8911</name>
</gene>
<protein>
    <recommendedName>
        <fullName>DNA mismatch repair protein HSM3</fullName>
    </recommendedName>
</protein>
<name>HSM3_CANAL</name>